<feature type="chain" id="PRO_0000147661" description="Dimethylaniline monooxygenase [N-oxide-forming] 4">
    <location>
        <begin position="1"/>
        <end position="560"/>
    </location>
</feature>
<feature type="transmembrane region" description="Helical" evidence="4">
    <location>
        <begin position="510"/>
        <end position="530"/>
    </location>
</feature>
<feature type="binding site" evidence="3">
    <location>
        <begin position="9"/>
        <end position="13"/>
    </location>
    <ligand>
        <name>FAD</name>
        <dbReference type="ChEBI" id="CHEBI:57692"/>
    </ligand>
</feature>
<feature type="binding site" evidence="3">
    <location>
        <position position="32"/>
    </location>
    <ligand>
        <name>FAD</name>
        <dbReference type="ChEBI" id="CHEBI:57692"/>
    </ligand>
</feature>
<feature type="binding site" evidence="3">
    <location>
        <begin position="40"/>
        <end position="41"/>
    </location>
    <ligand>
        <name>FAD</name>
        <dbReference type="ChEBI" id="CHEBI:57692"/>
    </ligand>
</feature>
<feature type="binding site" evidence="3">
    <location>
        <begin position="60"/>
        <end position="61"/>
    </location>
    <ligand>
        <name>NADP(+)</name>
        <dbReference type="ChEBI" id="CHEBI:58349"/>
    </ligand>
</feature>
<feature type="binding site" evidence="3">
    <location>
        <begin position="195"/>
        <end position="198"/>
    </location>
    <ligand>
        <name>NADP(+)</name>
        <dbReference type="ChEBI" id="CHEBI:58349"/>
    </ligand>
</feature>
<name>FMO4_MOUSE</name>
<organism>
    <name type="scientific">Mus musculus</name>
    <name type="common">Mouse</name>
    <dbReference type="NCBI Taxonomy" id="10090"/>
    <lineage>
        <taxon>Eukaryota</taxon>
        <taxon>Metazoa</taxon>
        <taxon>Chordata</taxon>
        <taxon>Craniata</taxon>
        <taxon>Vertebrata</taxon>
        <taxon>Euteleostomi</taxon>
        <taxon>Mammalia</taxon>
        <taxon>Eutheria</taxon>
        <taxon>Euarchontoglires</taxon>
        <taxon>Glires</taxon>
        <taxon>Rodentia</taxon>
        <taxon>Myomorpha</taxon>
        <taxon>Muroidea</taxon>
        <taxon>Muridae</taxon>
        <taxon>Murinae</taxon>
        <taxon>Mus</taxon>
        <taxon>Mus</taxon>
    </lineage>
</organism>
<gene>
    <name type="primary">Fmo4</name>
</gene>
<proteinExistence type="evidence at protein level"/>
<protein>
    <recommendedName>
        <fullName>Dimethylaniline monooxygenase [N-oxide-forming] 4</fullName>
        <ecNumber>1.14.13.8</ecNumber>
    </recommendedName>
    <alternativeName>
        <fullName>Dimethylaniline oxidase 4</fullName>
    </alternativeName>
    <alternativeName>
        <fullName>Hepatic flavin-containing monooxygenase 4</fullName>
        <shortName>FMO 4</shortName>
    </alternativeName>
</protein>
<reference key="1">
    <citation type="submission" date="2001-12" db="EMBL/GenBank/DDBJ databases">
        <title>The mouse flavin-containing monooxygenase gene cluster.</title>
        <authorList>
            <person name="Hernandez D."/>
            <person name="Janmohamed A."/>
            <person name="Chandan P."/>
            <person name="Phillips I.R."/>
            <person name="Shephard E.A."/>
        </authorList>
    </citation>
    <scope>NUCLEOTIDE SEQUENCE [MRNA]</scope>
    <source>
        <strain>129/Sv</strain>
        <tissue>Kidney</tissue>
    </source>
</reference>
<reference key="2">
    <citation type="journal article" date="2010" name="Cell">
        <title>A tissue-specific atlas of mouse protein phosphorylation and expression.</title>
        <authorList>
            <person name="Huttlin E.L."/>
            <person name="Jedrychowski M.P."/>
            <person name="Elias J.E."/>
            <person name="Goswami T."/>
            <person name="Rad R."/>
            <person name="Beausoleil S.A."/>
            <person name="Villen J."/>
            <person name="Haas W."/>
            <person name="Sowa M.E."/>
            <person name="Gygi S.P."/>
        </authorList>
    </citation>
    <scope>IDENTIFICATION BY MASS SPECTROMETRY [LARGE SCALE ANALYSIS]</scope>
    <source>
        <tissue>Liver</tissue>
    </source>
</reference>
<comment type="function">
    <text evidence="1">This protein is involved in the oxidative metabolism of a variety of xenobiotics such as drugs and pesticides.</text>
</comment>
<comment type="catalytic activity">
    <reaction>
        <text>N,N-dimethylaniline + NADPH + O2 + H(+) = N,N-dimethylaniline N-oxide + NADP(+) + H2O</text>
        <dbReference type="Rhea" id="RHEA:24468"/>
        <dbReference type="ChEBI" id="CHEBI:15377"/>
        <dbReference type="ChEBI" id="CHEBI:15378"/>
        <dbReference type="ChEBI" id="CHEBI:15379"/>
        <dbReference type="ChEBI" id="CHEBI:16269"/>
        <dbReference type="ChEBI" id="CHEBI:17735"/>
        <dbReference type="ChEBI" id="CHEBI:57783"/>
        <dbReference type="ChEBI" id="CHEBI:58349"/>
        <dbReference type="EC" id="1.14.13.8"/>
    </reaction>
</comment>
<comment type="cofactor">
    <cofactor evidence="1">
        <name>FAD</name>
        <dbReference type="ChEBI" id="CHEBI:57692"/>
    </cofactor>
</comment>
<comment type="subcellular location">
    <subcellularLocation>
        <location evidence="2">Microsome membrane</location>
        <topology evidence="4">Single-pass membrane protein</topology>
    </subcellularLocation>
    <subcellularLocation>
        <location evidence="2">Endoplasmic reticulum membrane</location>
        <topology evidence="4">Single-pass membrane protein</topology>
    </subcellularLocation>
</comment>
<comment type="similarity">
    <text evidence="5">Belongs to the FMO family.</text>
</comment>
<accession>Q8VHG0</accession>
<sequence length="560" mass="63792">MAKKVAVIGAGVSGLSSIKCCLDENLEPTCFERTSDFGGLWKFADTSEDGMTRVYRSLVTNVCKEMSCYSDFPFREDYPNFMSHEKFWDYLREFAEHFGLLRYIRFKTTVLSVTKRPDFSETGQWDVVTETEGKRDRAVFDAVMVCTGQFLSPHLPLESFPGIHKFKGQILHSQEYRIPDAFRGKRILVVGLGNTGGDIAVELSEIAAQVFLSTRTGTWVLSRSSPGGYPFNMIQTRWLNFLVRVLPSRFINWTHERKMNKILNHENYGLSIAKGKKPKFIVNDELPTCILCGKVTMKTSVKDFTESSVIFEDGTTEANIDVVIFTTGYEFSFPFFEEPLKSLCTKKIILYKRVFPPNLERATLAIIGLISLNGSILVGTEFQARWATRVFKGLCSIPPSQKLMAEATKTEQLIKRGVIKDTSQDKLDFITYMDELTQCIGAKPSIPLLFIKDPRLAWEVFFGPCTPYQYRLVGPGRWDGARNAILTQWDRTLKPLKTRIVPKSPEPTSLSHYLIAWGAPVLLVSLLLIYKSSHFLELVQGKLPRRFPPYRLLWYMPQNS</sequence>
<evidence type="ECO:0000250" key="1"/>
<evidence type="ECO:0000250" key="2">
    <source>
        <dbReference type="UniProtKB" id="Q8K4B7"/>
    </source>
</evidence>
<evidence type="ECO:0000250" key="3">
    <source>
        <dbReference type="UniProtKB" id="Q9HFE4"/>
    </source>
</evidence>
<evidence type="ECO:0000255" key="4"/>
<evidence type="ECO:0000305" key="5"/>
<dbReference type="EC" id="1.14.13.8"/>
<dbReference type="EMBL" id="AF461145">
    <property type="protein sequence ID" value="AAL66366.1"/>
    <property type="molecule type" value="mRNA"/>
</dbReference>
<dbReference type="CCDS" id="CCDS15423.1"/>
<dbReference type="RefSeq" id="NP_659127.1">
    <property type="nucleotide sequence ID" value="NM_144878.1"/>
</dbReference>
<dbReference type="RefSeq" id="XP_006496839.1">
    <property type="nucleotide sequence ID" value="XM_006496776.4"/>
</dbReference>
<dbReference type="RefSeq" id="XP_006496840.1">
    <property type="nucleotide sequence ID" value="XM_006496777.3"/>
</dbReference>
<dbReference type="SMR" id="Q8VHG0"/>
<dbReference type="BioGRID" id="230532">
    <property type="interactions" value="4"/>
</dbReference>
<dbReference type="FunCoup" id="Q8VHG0">
    <property type="interactions" value="83"/>
</dbReference>
<dbReference type="STRING" id="10090.ENSMUSP00000107150"/>
<dbReference type="iPTMnet" id="Q8VHG0"/>
<dbReference type="PhosphoSitePlus" id="Q8VHG0"/>
<dbReference type="jPOST" id="Q8VHG0"/>
<dbReference type="PaxDb" id="10090-ENSMUSP00000107150"/>
<dbReference type="PeptideAtlas" id="Q8VHG0"/>
<dbReference type="ProteomicsDB" id="273011"/>
<dbReference type="Antibodypedia" id="34378">
    <property type="antibodies" value="102 antibodies from 21 providers"/>
</dbReference>
<dbReference type="DNASU" id="226564"/>
<dbReference type="Ensembl" id="ENSMUST00000028014.10">
    <property type="protein sequence ID" value="ENSMUSP00000028014.4"/>
    <property type="gene ID" value="ENSMUSG00000026692.13"/>
</dbReference>
<dbReference type="Ensembl" id="ENSMUST00000111525.8">
    <property type="protein sequence ID" value="ENSMUSP00000107150.2"/>
    <property type="gene ID" value="ENSMUSG00000026692.13"/>
</dbReference>
<dbReference type="GeneID" id="226564"/>
<dbReference type="KEGG" id="mmu:226564"/>
<dbReference type="UCSC" id="uc007dgv.1">
    <property type="organism name" value="mouse"/>
</dbReference>
<dbReference type="AGR" id="MGI:2429497"/>
<dbReference type="CTD" id="2329"/>
<dbReference type="MGI" id="MGI:2429497">
    <property type="gene designation" value="Fmo4"/>
</dbReference>
<dbReference type="VEuPathDB" id="HostDB:ENSMUSG00000026692"/>
<dbReference type="eggNOG" id="KOG1399">
    <property type="taxonomic scope" value="Eukaryota"/>
</dbReference>
<dbReference type="GeneTree" id="ENSGT00940000160256"/>
<dbReference type="HOGENOM" id="CLU_006909_8_2_1"/>
<dbReference type="InParanoid" id="Q8VHG0"/>
<dbReference type="OMA" id="HYLKVWG"/>
<dbReference type="OrthoDB" id="66881at2759"/>
<dbReference type="PhylomeDB" id="Q8VHG0"/>
<dbReference type="TreeFam" id="TF105285"/>
<dbReference type="BRENDA" id="1.14.13.8">
    <property type="organism ID" value="3474"/>
</dbReference>
<dbReference type="BioGRID-ORCS" id="226564">
    <property type="hits" value="4 hits in 79 CRISPR screens"/>
</dbReference>
<dbReference type="PRO" id="PR:Q8VHG0"/>
<dbReference type="Proteomes" id="UP000000589">
    <property type="component" value="Chromosome 1"/>
</dbReference>
<dbReference type="RNAct" id="Q8VHG0">
    <property type="molecule type" value="protein"/>
</dbReference>
<dbReference type="Bgee" id="ENSMUSG00000026692">
    <property type="expression patterns" value="Expressed in right kidney and 35 other cell types or tissues"/>
</dbReference>
<dbReference type="ExpressionAtlas" id="Q8VHG0">
    <property type="expression patterns" value="baseline and differential"/>
</dbReference>
<dbReference type="GO" id="GO:0005789">
    <property type="term" value="C:endoplasmic reticulum membrane"/>
    <property type="evidence" value="ECO:0007669"/>
    <property type="project" value="UniProtKB-SubCell"/>
</dbReference>
<dbReference type="GO" id="GO:0050660">
    <property type="term" value="F:flavin adenine dinucleotide binding"/>
    <property type="evidence" value="ECO:0007669"/>
    <property type="project" value="InterPro"/>
</dbReference>
<dbReference type="GO" id="GO:0004499">
    <property type="term" value="F:N,N-dimethylaniline monooxygenase activity"/>
    <property type="evidence" value="ECO:0007669"/>
    <property type="project" value="InterPro"/>
</dbReference>
<dbReference type="GO" id="GO:0050661">
    <property type="term" value="F:NADP binding"/>
    <property type="evidence" value="ECO:0007669"/>
    <property type="project" value="InterPro"/>
</dbReference>
<dbReference type="GO" id="GO:0097009">
    <property type="term" value="P:energy homeostasis"/>
    <property type="evidence" value="ECO:0000316"/>
    <property type="project" value="MGI"/>
</dbReference>
<dbReference type="GO" id="GO:0046322">
    <property type="term" value="P:negative regulation of fatty acid oxidation"/>
    <property type="evidence" value="ECO:0000316"/>
    <property type="project" value="MGI"/>
</dbReference>
<dbReference type="GO" id="GO:0042178">
    <property type="term" value="P:xenobiotic catabolic process"/>
    <property type="evidence" value="ECO:0000315"/>
    <property type="project" value="MGI"/>
</dbReference>
<dbReference type="FunFam" id="3.50.50.60:FF:000023">
    <property type="entry name" value="Dimethylaniline monooxygenase [N-oxide-forming]"/>
    <property type="match status" value="1"/>
</dbReference>
<dbReference type="FunFam" id="3.50.50.60:FF:000042">
    <property type="entry name" value="Dimethylaniline monooxygenase [N-oxide-forming]"/>
    <property type="match status" value="1"/>
</dbReference>
<dbReference type="FunFam" id="3.50.50.60:FF:000073">
    <property type="entry name" value="Dimethylaniline monooxygenase [N-oxide-forming]"/>
    <property type="match status" value="1"/>
</dbReference>
<dbReference type="FunFam" id="3.50.50.60:FF:000183">
    <property type="entry name" value="Dimethylaniline monooxygenase [N-oxide-forming]"/>
    <property type="match status" value="1"/>
</dbReference>
<dbReference type="Gene3D" id="3.50.50.60">
    <property type="entry name" value="FAD/NAD(P)-binding domain"/>
    <property type="match status" value="1"/>
</dbReference>
<dbReference type="InterPro" id="IPR036188">
    <property type="entry name" value="FAD/NAD-bd_sf"/>
</dbReference>
<dbReference type="InterPro" id="IPR000960">
    <property type="entry name" value="Flavin_mOase"/>
</dbReference>
<dbReference type="InterPro" id="IPR020946">
    <property type="entry name" value="Flavin_mOase-like"/>
</dbReference>
<dbReference type="InterPro" id="IPR002256">
    <property type="entry name" value="Flavin_mOase_4"/>
</dbReference>
<dbReference type="InterPro" id="IPR050346">
    <property type="entry name" value="FMO-like"/>
</dbReference>
<dbReference type="PANTHER" id="PTHR23023">
    <property type="entry name" value="DIMETHYLANILINE MONOOXYGENASE"/>
    <property type="match status" value="1"/>
</dbReference>
<dbReference type="Pfam" id="PF00743">
    <property type="entry name" value="FMO-like"/>
    <property type="match status" value="1"/>
</dbReference>
<dbReference type="PIRSF" id="PIRSF000332">
    <property type="entry name" value="FMO"/>
    <property type="match status" value="1"/>
</dbReference>
<dbReference type="PRINTS" id="PR00370">
    <property type="entry name" value="FMOXYGENASE"/>
</dbReference>
<dbReference type="PRINTS" id="PR01124">
    <property type="entry name" value="FMOXYGENASE4"/>
</dbReference>
<dbReference type="SUPFAM" id="SSF51905">
    <property type="entry name" value="FAD/NAD(P)-binding domain"/>
    <property type="match status" value="2"/>
</dbReference>
<keyword id="KW-0256">Endoplasmic reticulum</keyword>
<keyword id="KW-0274">FAD</keyword>
<keyword id="KW-0285">Flavoprotein</keyword>
<keyword id="KW-0472">Membrane</keyword>
<keyword id="KW-0492">Microsome</keyword>
<keyword id="KW-0503">Monooxygenase</keyword>
<keyword id="KW-0521">NADP</keyword>
<keyword id="KW-0560">Oxidoreductase</keyword>
<keyword id="KW-1185">Reference proteome</keyword>
<keyword id="KW-0812">Transmembrane</keyword>
<keyword id="KW-1133">Transmembrane helix</keyword>